<accession>Q83GE9</accession>
<dbReference type="EC" id="6.1.1.19" evidence="1"/>
<dbReference type="EMBL" id="AE014184">
    <property type="protein sequence ID" value="AAO44448.1"/>
    <property type="molecule type" value="Genomic_DNA"/>
</dbReference>
<dbReference type="RefSeq" id="WP_011102520.1">
    <property type="nucleotide sequence ID" value="NC_004572.3"/>
</dbReference>
<dbReference type="SMR" id="Q83GE9"/>
<dbReference type="STRING" id="203267.TWT_351"/>
<dbReference type="KEGG" id="twh:TWT_351"/>
<dbReference type="eggNOG" id="COG0018">
    <property type="taxonomic scope" value="Bacteria"/>
</dbReference>
<dbReference type="HOGENOM" id="CLU_006406_0_1_11"/>
<dbReference type="OrthoDB" id="9803211at2"/>
<dbReference type="Proteomes" id="UP000002200">
    <property type="component" value="Chromosome"/>
</dbReference>
<dbReference type="GO" id="GO:0005737">
    <property type="term" value="C:cytoplasm"/>
    <property type="evidence" value="ECO:0007669"/>
    <property type="project" value="UniProtKB-SubCell"/>
</dbReference>
<dbReference type="GO" id="GO:0004814">
    <property type="term" value="F:arginine-tRNA ligase activity"/>
    <property type="evidence" value="ECO:0007669"/>
    <property type="project" value="UniProtKB-UniRule"/>
</dbReference>
<dbReference type="GO" id="GO:0005524">
    <property type="term" value="F:ATP binding"/>
    <property type="evidence" value="ECO:0007669"/>
    <property type="project" value="UniProtKB-UniRule"/>
</dbReference>
<dbReference type="GO" id="GO:0006420">
    <property type="term" value="P:arginyl-tRNA aminoacylation"/>
    <property type="evidence" value="ECO:0007669"/>
    <property type="project" value="UniProtKB-UniRule"/>
</dbReference>
<dbReference type="CDD" id="cd00671">
    <property type="entry name" value="ArgRS_core"/>
    <property type="match status" value="1"/>
</dbReference>
<dbReference type="FunFam" id="1.10.730.10:FF:000008">
    <property type="entry name" value="Arginine--tRNA ligase"/>
    <property type="match status" value="1"/>
</dbReference>
<dbReference type="Gene3D" id="3.30.1360.70">
    <property type="entry name" value="Arginyl tRNA synthetase N-terminal domain"/>
    <property type="match status" value="1"/>
</dbReference>
<dbReference type="Gene3D" id="3.40.50.620">
    <property type="entry name" value="HUPs"/>
    <property type="match status" value="1"/>
</dbReference>
<dbReference type="Gene3D" id="1.10.730.10">
    <property type="entry name" value="Isoleucyl-tRNA Synthetase, Domain 1"/>
    <property type="match status" value="1"/>
</dbReference>
<dbReference type="HAMAP" id="MF_00123">
    <property type="entry name" value="Arg_tRNA_synth"/>
    <property type="match status" value="1"/>
</dbReference>
<dbReference type="InterPro" id="IPR001278">
    <property type="entry name" value="Arg-tRNA-ligase"/>
</dbReference>
<dbReference type="InterPro" id="IPR005148">
    <property type="entry name" value="Arg-tRNA-synth_N"/>
</dbReference>
<dbReference type="InterPro" id="IPR036695">
    <property type="entry name" value="Arg-tRNA-synth_N_sf"/>
</dbReference>
<dbReference type="InterPro" id="IPR035684">
    <property type="entry name" value="ArgRS_core"/>
</dbReference>
<dbReference type="InterPro" id="IPR008909">
    <property type="entry name" value="DALR_anticod-bd"/>
</dbReference>
<dbReference type="InterPro" id="IPR014729">
    <property type="entry name" value="Rossmann-like_a/b/a_fold"/>
</dbReference>
<dbReference type="InterPro" id="IPR009080">
    <property type="entry name" value="tRNAsynth_Ia_anticodon-bd"/>
</dbReference>
<dbReference type="NCBIfam" id="TIGR00456">
    <property type="entry name" value="argS"/>
    <property type="match status" value="1"/>
</dbReference>
<dbReference type="PANTHER" id="PTHR11956:SF5">
    <property type="entry name" value="ARGININE--TRNA LIGASE, CYTOPLASMIC"/>
    <property type="match status" value="1"/>
</dbReference>
<dbReference type="PANTHER" id="PTHR11956">
    <property type="entry name" value="ARGINYL-TRNA SYNTHETASE"/>
    <property type="match status" value="1"/>
</dbReference>
<dbReference type="Pfam" id="PF03485">
    <property type="entry name" value="Arg_tRNA_synt_N"/>
    <property type="match status" value="1"/>
</dbReference>
<dbReference type="Pfam" id="PF05746">
    <property type="entry name" value="DALR_1"/>
    <property type="match status" value="1"/>
</dbReference>
<dbReference type="Pfam" id="PF00750">
    <property type="entry name" value="tRNA-synt_1d"/>
    <property type="match status" value="1"/>
</dbReference>
<dbReference type="PRINTS" id="PR01038">
    <property type="entry name" value="TRNASYNTHARG"/>
</dbReference>
<dbReference type="SMART" id="SM01016">
    <property type="entry name" value="Arg_tRNA_synt_N"/>
    <property type="match status" value="1"/>
</dbReference>
<dbReference type="SMART" id="SM00836">
    <property type="entry name" value="DALR_1"/>
    <property type="match status" value="1"/>
</dbReference>
<dbReference type="SUPFAM" id="SSF47323">
    <property type="entry name" value="Anticodon-binding domain of a subclass of class I aminoacyl-tRNA synthetases"/>
    <property type="match status" value="1"/>
</dbReference>
<dbReference type="SUPFAM" id="SSF55190">
    <property type="entry name" value="Arginyl-tRNA synthetase (ArgRS), N-terminal 'additional' domain"/>
    <property type="match status" value="1"/>
</dbReference>
<dbReference type="SUPFAM" id="SSF52374">
    <property type="entry name" value="Nucleotidylyl transferase"/>
    <property type="match status" value="1"/>
</dbReference>
<proteinExistence type="inferred from homology"/>
<sequence length="552" mass="62999">MNVEDLKKSVTNIVHSMYNFDCSEIVSLTRPPKPEYGDWALSLPLKLASLLKSPAIDIAQSIASALLELDGVQDVYVAKPGFINLKLSREHTTGIISEVLEQGSSFGRNTTQSSKKINLEFVSGNPTGPLHLAHTRWAAVGDSIARILINCGADVTREYYINNVGNQIHLFSESVYARALSKSLPKDGYPGEYVKDIARRIQCEFPNIIDLSYEDAIKIFRKRSWQIQIEEIKKSCIAFRVNFDVWFSEESLHEPDRFGKSQIDKALARCKQNGYLFQKNGAFFIRTTEFGDDKDRAVLRSDTSYTYYAADCAYYLNKINRGFSDLVILVGADHHGYVKRFQAMSNIFHVDSENNRKNVQVLLGQMVLLKNKRQSKREGNVIGLSEIIQSVGVDPLRFWFCRYPIDTPIDLDEQHLKKRSNDNPVYYVQYAYARTRSLIRSANLLQMEKFGFFPELLVHETETALVSLLYDYKTVVIDAARFLQPHRVVRYLESLAGAYHKWYDKCRIIPRKGILDKSEAELVNTRLELNRAVGQVLYNALDLIGVSAPERM</sequence>
<keyword id="KW-0030">Aminoacyl-tRNA synthetase</keyword>
<keyword id="KW-0067">ATP-binding</keyword>
<keyword id="KW-0963">Cytoplasm</keyword>
<keyword id="KW-0436">Ligase</keyword>
<keyword id="KW-0547">Nucleotide-binding</keyword>
<keyword id="KW-0648">Protein biosynthesis</keyword>
<keyword id="KW-1185">Reference proteome</keyword>
<gene>
    <name evidence="1" type="primary">argS</name>
    <name type="ordered locus">TWT_351</name>
</gene>
<protein>
    <recommendedName>
        <fullName evidence="1">Arginine--tRNA ligase</fullName>
        <ecNumber evidence="1">6.1.1.19</ecNumber>
    </recommendedName>
    <alternativeName>
        <fullName evidence="1">Arginyl-tRNA synthetase</fullName>
        <shortName evidence="1">ArgRS</shortName>
    </alternativeName>
</protein>
<feature type="chain" id="PRO_0000242118" description="Arginine--tRNA ligase">
    <location>
        <begin position="1"/>
        <end position="552"/>
    </location>
</feature>
<feature type="short sequence motif" description="'HIGH' region">
    <location>
        <begin position="124"/>
        <end position="134"/>
    </location>
</feature>
<reference key="1">
    <citation type="journal article" date="2003" name="Genome Res.">
        <title>Tropheryma whipplei twist: a human pathogenic Actinobacteria with a reduced genome.</title>
        <authorList>
            <person name="Raoult D."/>
            <person name="Ogata H."/>
            <person name="Audic S."/>
            <person name="Robert C."/>
            <person name="Suhre K."/>
            <person name="Drancourt M."/>
            <person name="Claverie J.-M."/>
        </authorList>
    </citation>
    <scope>NUCLEOTIDE SEQUENCE [LARGE SCALE GENOMIC DNA]</scope>
    <source>
        <strain>Twist</strain>
    </source>
</reference>
<evidence type="ECO:0000255" key="1">
    <source>
        <dbReference type="HAMAP-Rule" id="MF_00123"/>
    </source>
</evidence>
<comment type="catalytic activity">
    <reaction evidence="1">
        <text>tRNA(Arg) + L-arginine + ATP = L-arginyl-tRNA(Arg) + AMP + diphosphate</text>
        <dbReference type="Rhea" id="RHEA:20301"/>
        <dbReference type="Rhea" id="RHEA-COMP:9658"/>
        <dbReference type="Rhea" id="RHEA-COMP:9673"/>
        <dbReference type="ChEBI" id="CHEBI:30616"/>
        <dbReference type="ChEBI" id="CHEBI:32682"/>
        <dbReference type="ChEBI" id="CHEBI:33019"/>
        <dbReference type="ChEBI" id="CHEBI:78442"/>
        <dbReference type="ChEBI" id="CHEBI:78513"/>
        <dbReference type="ChEBI" id="CHEBI:456215"/>
        <dbReference type="EC" id="6.1.1.19"/>
    </reaction>
</comment>
<comment type="subunit">
    <text evidence="1">Monomer.</text>
</comment>
<comment type="subcellular location">
    <subcellularLocation>
        <location evidence="1">Cytoplasm</location>
    </subcellularLocation>
</comment>
<comment type="similarity">
    <text evidence="1">Belongs to the class-I aminoacyl-tRNA synthetase family.</text>
</comment>
<name>SYR_TROWT</name>
<organism>
    <name type="scientific">Tropheryma whipplei (strain Twist)</name>
    <name type="common">Whipple's bacillus</name>
    <dbReference type="NCBI Taxonomy" id="203267"/>
    <lineage>
        <taxon>Bacteria</taxon>
        <taxon>Bacillati</taxon>
        <taxon>Actinomycetota</taxon>
        <taxon>Actinomycetes</taxon>
        <taxon>Micrococcales</taxon>
        <taxon>Tropherymataceae</taxon>
        <taxon>Tropheryma</taxon>
    </lineage>
</organism>